<gene>
    <name type="primary">ispE</name>
    <name type="ordered locus">SUB0109</name>
</gene>
<organism>
    <name type="scientific">Streptococcus uberis (strain ATCC BAA-854 / 0140J)</name>
    <dbReference type="NCBI Taxonomy" id="218495"/>
    <lineage>
        <taxon>Bacteria</taxon>
        <taxon>Bacillati</taxon>
        <taxon>Bacillota</taxon>
        <taxon>Bacilli</taxon>
        <taxon>Lactobacillales</taxon>
        <taxon>Streptococcaceae</taxon>
        <taxon>Streptococcus</taxon>
    </lineage>
</organism>
<dbReference type="EC" id="2.7.1.148" evidence="1"/>
<dbReference type="EMBL" id="AM946015">
    <property type="protein sequence ID" value="CAR40512.1"/>
    <property type="molecule type" value="Genomic_DNA"/>
</dbReference>
<dbReference type="RefSeq" id="WP_012657664.1">
    <property type="nucleotide sequence ID" value="NC_012004.1"/>
</dbReference>
<dbReference type="SMR" id="B9DSY9"/>
<dbReference type="STRING" id="218495.SUB0109"/>
<dbReference type="GeneID" id="93825349"/>
<dbReference type="KEGG" id="sub:SUB0109"/>
<dbReference type="eggNOG" id="COG1947">
    <property type="taxonomic scope" value="Bacteria"/>
</dbReference>
<dbReference type="HOGENOM" id="CLU_053057_1_1_9"/>
<dbReference type="OrthoDB" id="9809438at2"/>
<dbReference type="Proteomes" id="UP000000449">
    <property type="component" value="Chromosome"/>
</dbReference>
<dbReference type="GO" id="GO:0050515">
    <property type="term" value="F:4-(cytidine 5'-diphospho)-2-C-methyl-D-erythritol kinase activity"/>
    <property type="evidence" value="ECO:0007669"/>
    <property type="project" value="UniProtKB-UniRule"/>
</dbReference>
<dbReference type="GO" id="GO:0005524">
    <property type="term" value="F:ATP binding"/>
    <property type="evidence" value="ECO:0007669"/>
    <property type="project" value="UniProtKB-UniRule"/>
</dbReference>
<dbReference type="GO" id="GO:0016114">
    <property type="term" value="P:terpenoid biosynthetic process"/>
    <property type="evidence" value="ECO:0007669"/>
    <property type="project" value="InterPro"/>
</dbReference>
<dbReference type="Gene3D" id="3.30.230.10">
    <property type="match status" value="1"/>
</dbReference>
<dbReference type="Gene3D" id="3.30.70.890">
    <property type="entry name" value="GHMP kinase, C-terminal domain"/>
    <property type="match status" value="1"/>
</dbReference>
<dbReference type="HAMAP" id="MF_00061">
    <property type="entry name" value="IspE"/>
    <property type="match status" value="1"/>
</dbReference>
<dbReference type="InterPro" id="IPR013750">
    <property type="entry name" value="GHMP_kinase_C_dom"/>
</dbReference>
<dbReference type="InterPro" id="IPR036554">
    <property type="entry name" value="GHMP_kinase_C_sf"/>
</dbReference>
<dbReference type="InterPro" id="IPR006204">
    <property type="entry name" value="GHMP_kinase_N_dom"/>
</dbReference>
<dbReference type="InterPro" id="IPR004424">
    <property type="entry name" value="IspE"/>
</dbReference>
<dbReference type="InterPro" id="IPR020568">
    <property type="entry name" value="Ribosomal_Su5_D2-typ_SF"/>
</dbReference>
<dbReference type="InterPro" id="IPR014721">
    <property type="entry name" value="Ribsml_uS5_D2-typ_fold_subgr"/>
</dbReference>
<dbReference type="NCBIfam" id="TIGR00154">
    <property type="entry name" value="ispE"/>
    <property type="match status" value="1"/>
</dbReference>
<dbReference type="PANTHER" id="PTHR43527">
    <property type="entry name" value="4-DIPHOSPHOCYTIDYL-2-C-METHYL-D-ERYTHRITOL KINASE, CHLOROPLASTIC"/>
    <property type="match status" value="1"/>
</dbReference>
<dbReference type="PANTHER" id="PTHR43527:SF2">
    <property type="entry name" value="4-DIPHOSPHOCYTIDYL-2-C-METHYL-D-ERYTHRITOL KINASE, CHLOROPLASTIC"/>
    <property type="match status" value="1"/>
</dbReference>
<dbReference type="Pfam" id="PF08544">
    <property type="entry name" value="GHMP_kinases_C"/>
    <property type="match status" value="1"/>
</dbReference>
<dbReference type="Pfam" id="PF00288">
    <property type="entry name" value="GHMP_kinases_N"/>
    <property type="match status" value="1"/>
</dbReference>
<dbReference type="PIRSF" id="PIRSF010376">
    <property type="entry name" value="IspE"/>
    <property type="match status" value="1"/>
</dbReference>
<dbReference type="PRINTS" id="PR00958">
    <property type="entry name" value="HOMSERKINASE"/>
</dbReference>
<dbReference type="SUPFAM" id="SSF55060">
    <property type="entry name" value="GHMP Kinase, C-terminal domain"/>
    <property type="match status" value="1"/>
</dbReference>
<dbReference type="SUPFAM" id="SSF54211">
    <property type="entry name" value="Ribosomal protein S5 domain 2-like"/>
    <property type="match status" value="1"/>
</dbReference>
<feature type="chain" id="PRO_1000190702" description="Putative 4-diphosphocytidyl-2-C-methyl-D-erythritol kinase">
    <location>
        <begin position="1"/>
        <end position="283"/>
    </location>
</feature>
<feature type="active site" evidence="1">
    <location>
        <position position="11"/>
    </location>
</feature>
<feature type="active site" evidence="1">
    <location>
        <position position="137"/>
    </location>
</feature>
<feature type="binding site" evidence="1">
    <location>
        <begin position="95"/>
        <end position="105"/>
    </location>
    <ligand>
        <name>ATP</name>
        <dbReference type="ChEBI" id="CHEBI:30616"/>
    </ligand>
</feature>
<accession>B9DSY9</accession>
<name>ISPE_STRU0</name>
<proteinExistence type="inferred from homology"/>
<reference key="1">
    <citation type="journal article" date="2009" name="BMC Genomics">
        <title>Evidence for niche adaptation in the genome of the bovine pathogen Streptococcus uberis.</title>
        <authorList>
            <person name="Ward P.N."/>
            <person name="Holden M.T.G."/>
            <person name="Leigh J.A."/>
            <person name="Lennard N."/>
            <person name="Bignell A."/>
            <person name="Barron A."/>
            <person name="Clark L."/>
            <person name="Quail M.A."/>
            <person name="Woodward J."/>
            <person name="Barrell B.G."/>
            <person name="Egan S.A."/>
            <person name="Field T.R."/>
            <person name="Maskell D."/>
            <person name="Kehoe M."/>
            <person name="Dowson C.G."/>
            <person name="Chanter N."/>
            <person name="Whatmore A.M."/>
            <person name="Bentley S.D."/>
            <person name="Parkhill J."/>
        </authorList>
    </citation>
    <scope>NUCLEOTIDE SEQUENCE [LARGE SCALE GENOMIC DNA]</scope>
    <source>
        <strain>ATCC BAA-854 / 0140J</strain>
    </source>
</reference>
<evidence type="ECO:0000255" key="1">
    <source>
        <dbReference type="HAMAP-Rule" id="MF_00061"/>
    </source>
</evidence>
<keyword id="KW-0067">ATP-binding</keyword>
<keyword id="KW-0418">Kinase</keyword>
<keyword id="KW-0547">Nucleotide-binding</keyword>
<keyword id="KW-1185">Reference proteome</keyword>
<keyword id="KW-0808">Transferase</keyword>
<protein>
    <recommendedName>
        <fullName evidence="1">Putative 4-diphosphocytidyl-2-C-methyl-D-erythritol kinase</fullName>
        <shortName evidence="1">CMK</shortName>
        <ecNumber evidence="1">2.7.1.148</ecNumber>
    </recommendedName>
    <alternativeName>
        <fullName evidence="1">4-(cytidine-5'-diphospho)-2-C-methyl-D-erythritol kinase</fullName>
    </alternativeName>
</protein>
<sequence length="283" mass="30678">MVSIIERAPAKINLGLDVLGKREDGYHDLEMVMISIDLCDYVTVSPLKDDVIMIESDCPKMPINEKNDVYKVAKLIKSRYAISEGVSILLNKKIPVCAGMGGGSSDAAATIRALNQLWDLKLSMEEMIAIGIAIGSDVPYCIQAGCAKIGGKGDRIELIDGKLSSWVVLVKPDFGISTRTVFPEIDCDVISRVDISAIVNALEGNNYSDLITHMGNALEDISIARKPFIQKVKDKMVAAGADVALMTGSGPTVFALCQTEKQANRVFNSVKGFCKEVYKVRTL</sequence>
<comment type="function">
    <text evidence="1">Catalyzes the phosphorylation of the position 2 hydroxy group of 4-diphosphocytidyl-2C-methyl-D-erythritol.</text>
</comment>
<comment type="catalytic activity">
    <reaction evidence="1">
        <text>4-CDP-2-C-methyl-D-erythritol + ATP = 4-CDP-2-C-methyl-D-erythritol 2-phosphate + ADP + H(+)</text>
        <dbReference type="Rhea" id="RHEA:18437"/>
        <dbReference type="ChEBI" id="CHEBI:15378"/>
        <dbReference type="ChEBI" id="CHEBI:30616"/>
        <dbReference type="ChEBI" id="CHEBI:57823"/>
        <dbReference type="ChEBI" id="CHEBI:57919"/>
        <dbReference type="ChEBI" id="CHEBI:456216"/>
        <dbReference type="EC" id="2.7.1.148"/>
    </reaction>
</comment>
<comment type="similarity">
    <text evidence="1">Belongs to the GHMP kinase family. IspE subfamily.</text>
</comment>